<name>MINC_PROMA</name>
<organism>
    <name type="scientific">Prochlorococcus marinus (strain SARG / CCMP1375 / SS120)</name>
    <dbReference type="NCBI Taxonomy" id="167539"/>
    <lineage>
        <taxon>Bacteria</taxon>
        <taxon>Bacillati</taxon>
        <taxon>Cyanobacteriota</taxon>
        <taxon>Cyanophyceae</taxon>
        <taxon>Synechococcales</taxon>
        <taxon>Prochlorococcaceae</taxon>
        <taxon>Prochlorococcus</taxon>
    </lineage>
</organism>
<dbReference type="EMBL" id="AE017126">
    <property type="protein sequence ID" value="AAP99410.1"/>
    <property type="molecule type" value="Genomic_DNA"/>
</dbReference>
<dbReference type="RefSeq" id="NP_874758.1">
    <property type="nucleotide sequence ID" value="NC_005042.1"/>
</dbReference>
<dbReference type="RefSeq" id="WP_011124519.1">
    <property type="nucleotide sequence ID" value="NC_005042.1"/>
</dbReference>
<dbReference type="SMR" id="Q7VDL2"/>
<dbReference type="STRING" id="167539.Pro_0364"/>
<dbReference type="EnsemblBacteria" id="AAP99410">
    <property type="protein sequence ID" value="AAP99410"/>
    <property type="gene ID" value="Pro_0364"/>
</dbReference>
<dbReference type="KEGG" id="pma:Pro_0364"/>
<dbReference type="PATRIC" id="fig|167539.5.peg.372"/>
<dbReference type="eggNOG" id="COG0850">
    <property type="taxonomic scope" value="Bacteria"/>
</dbReference>
<dbReference type="HOGENOM" id="CLU_048711_0_2_3"/>
<dbReference type="OrthoDB" id="9790810at2"/>
<dbReference type="Proteomes" id="UP000001420">
    <property type="component" value="Chromosome"/>
</dbReference>
<dbReference type="GO" id="GO:0000902">
    <property type="term" value="P:cell morphogenesis"/>
    <property type="evidence" value="ECO:0007669"/>
    <property type="project" value="InterPro"/>
</dbReference>
<dbReference type="GO" id="GO:0000917">
    <property type="term" value="P:division septum assembly"/>
    <property type="evidence" value="ECO:0007669"/>
    <property type="project" value="UniProtKB-KW"/>
</dbReference>
<dbReference type="GO" id="GO:1901891">
    <property type="term" value="P:regulation of cell septum assembly"/>
    <property type="evidence" value="ECO:0007669"/>
    <property type="project" value="InterPro"/>
</dbReference>
<dbReference type="Gene3D" id="2.160.20.70">
    <property type="match status" value="1"/>
</dbReference>
<dbReference type="HAMAP" id="MF_00267">
    <property type="entry name" value="MinC"/>
    <property type="match status" value="1"/>
</dbReference>
<dbReference type="InterPro" id="IPR016098">
    <property type="entry name" value="CAP/MinC_C"/>
</dbReference>
<dbReference type="InterPro" id="IPR013033">
    <property type="entry name" value="MinC"/>
</dbReference>
<dbReference type="InterPro" id="IPR036145">
    <property type="entry name" value="MinC_C_sf"/>
</dbReference>
<dbReference type="InterPro" id="IPR005526">
    <property type="entry name" value="Septum_form_inhib_MinC_C"/>
</dbReference>
<dbReference type="NCBIfam" id="TIGR01222">
    <property type="entry name" value="minC"/>
    <property type="match status" value="1"/>
</dbReference>
<dbReference type="PANTHER" id="PTHR34108">
    <property type="entry name" value="SEPTUM SITE-DETERMINING PROTEIN MINC"/>
    <property type="match status" value="1"/>
</dbReference>
<dbReference type="PANTHER" id="PTHR34108:SF1">
    <property type="entry name" value="SEPTUM SITE-DETERMINING PROTEIN MINC"/>
    <property type="match status" value="1"/>
</dbReference>
<dbReference type="Pfam" id="PF03775">
    <property type="entry name" value="MinC_C"/>
    <property type="match status" value="1"/>
</dbReference>
<dbReference type="SUPFAM" id="SSF63848">
    <property type="entry name" value="Cell-division inhibitor MinC, C-terminal domain"/>
    <property type="match status" value="1"/>
</dbReference>
<reference key="1">
    <citation type="journal article" date="2003" name="Proc. Natl. Acad. Sci. U.S.A.">
        <title>Genome sequence of the cyanobacterium Prochlorococcus marinus SS120, a nearly minimal oxyphototrophic genome.</title>
        <authorList>
            <person name="Dufresne A."/>
            <person name="Salanoubat M."/>
            <person name="Partensky F."/>
            <person name="Artiguenave F."/>
            <person name="Axmann I.M."/>
            <person name="Barbe V."/>
            <person name="Duprat S."/>
            <person name="Galperin M.Y."/>
            <person name="Koonin E.V."/>
            <person name="Le Gall F."/>
            <person name="Makarova K.S."/>
            <person name="Ostrowski M."/>
            <person name="Oztas S."/>
            <person name="Robert C."/>
            <person name="Rogozin I.B."/>
            <person name="Scanlan D.J."/>
            <person name="Tandeau de Marsac N."/>
            <person name="Weissenbach J."/>
            <person name="Wincker P."/>
            <person name="Wolf Y.I."/>
            <person name="Hess W.R."/>
        </authorList>
    </citation>
    <scope>NUCLEOTIDE SEQUENCE [LARGE SCALE GENOMIC DNA]</scope>
    <source>
        <strain>SARG / CCMP1375 / SS120</strain>
    </source>
</reference>
<accession>Q7VDL2</accession>
<comment type="function">
    <text evidence="1">Cell division inhibitor that blocks the formation of polar Z ring septums. Rapidly oscillates between the poles of the cell to destabilize FtsZ filaments that have formed before they mature into polar Z rings. Prevents FtsZ polymerization.</text>
</comment>
<comment type="subunit">
    <text evidence="1">Interacts with MinD and FtsZ.</text>
</comment>
<comment type="similarity">
    <text evidence="1">Belongs to the MinC family.</text>
</comment>
<feature type="chain" id="PRO_0000189051" description="Probable septum site-determining protein MinC">
    <location>
        <begin position="1"/>
        <end position="221"/>
    </location>
</feature>
<gene>
    <name evidence="1" type="primary">minC</name>
    <name type="ordered locus">Pro_0364</name>
</gene>
<keyword id="KW-0131">Cell cycle</keyword>
<keyword id="KW-0132">Cell division</keyword>
<keyword id="KW-1185">Reference proteome</keyword>
<keyword id="KW-0717">Septation</keyword>
<proteinExistence type="inferred from homology"/>
<protein>
    <recommendedName>
        <fullName evidence="1">Probable septum site-determining protein MinC</fullName>
    </recommendedName>
</protein>
<evidence type="ECO:0000255" key="1">
    <source>
        <dbReference type="HAMAP-Rule" id="MF_00267"/>
    </source>
</evidence>
<sequence>MSLNNLNKKENFISIQLLSENWAEELRLSIKGYQKGFIKINSGALPLTCKDINELKRICNGVGMEIISIESTNAESIVSASALGLNANLKLKDNVFTEVKSDFKDLSESKVNAALLFHKGTLRSGEVLEADEDILILGDVNPGATVLAGGNVMIWGRLLGIAHAGKYGNNQAKITALQLRPVQLRIANKIARGPKEKPELGLAEEATIQEEVIVIKPARTT</sequence>